<evidence type="ECO:0000255" key="1"/>
<evidence type="ECO:0000255" key="2">
    <source>
        <dbReference type="PROSITE-ProRule" id="PRU01091"/>
    </source>
</evidence>
<evidence type="ECO:0000256" key="3">
    <source>
        <dbReference type="SAM" id="MobiDB-lite"/>
    </source>
</evidence>
<evidence type="ECO:0000305" key="4"/>
<evidence type="ECO:0007829" key="5">
    <source>
        <dbReference type="PDB" id="8HVR"/>
    </source>
</evidence>
<gene>
    <name type="primary">afsR</name>
    <name type="synonym">afsB</name>
    <name type="ordered locus">SCO4426</name>
    <name type="ORF">SCD6.04c</name>
</gene>
<organism>
    <name type="scientific">Streptomyces coelicolor (strain ATCC BAA-471 / A3(2) / M145)</name>
    <dbReference type="NCBI Taxonomy" id="100226"/>
    <lineage>
        <taxon>Bacteria</taxon>
        <taxon>Bacillati</taxon>
        <taxon>Actinomycetota</taxon>
        <taxon>Actinomycetes</taxon>
        <taxon>Kitasatosporales</taxon>
        <taxon>Streptomycetaceae</taxon>
        <taxon>Streptomyces</taxon>
        <taxon>Streptomyces albidoflavus group</taxon>
    </lineage>
</organism>
<accession>P25941</accession>
<accession>P08467</accession>
<accession>Q9L000</accession>
<sequence>MDGGPRVPEQRRPGFPAEEEESGALRFGVLGPVRAWRDGETLATGSPQQRALLAALLLREGRTATAGELIDALWGEEPPSQALAAVRTYASRLRKVLDPGVLVSESGGYAVRGLAEGALDLARAQDLASAAEKARSAGDLCHARDLLRRALDLWDGEVLAGVPGPYAQTQRVRLGEWRLQLLETRLDMDLDQGCHAEAVSELTALTAAHPLRERLRELLMLALYRSGRQAEALAVYADTRRLLADELGVDPRPGLQELQQRILQADPALAELSAATAETATATLRPAQLPATVSDFTGRAAFVRELSDVLSAASGESASGRVMAVSALAGIGGVGKTTLAVHVAHRARAAFPDGQLYVDLQGAGARPAEPETVLGSFLRALGTADSAIPDSLEERAALYRSVLDGRRVLVLLDNARDAAQVRPLLPGTDGCAALVTARVRMVDLAGAHLVDLDVMAPEEALALFTKIVGEERVASERQAALDVVGACGFLPLAIRIAASRLAARRTWTVSVLAAKLADERRRLDELQAGDQAVEATFELGYGQLEPAQARAFRLLGLADGPDISLAAAAAVLDLPAQDTEDLLESLVDTSLLESAAPGRYRFHDLVRLYARACAERTERDGNAPSERGAALSRLLDFYLATAAGVYAIERPGDRLVDGLEPTEYPGLTFTEGSAALDWLYTEAAPLLACVRQSAGTARLRRAVDLLWAAKDLTESGANSHQYEATARAMCDATGSAADTRAEGRARTVLSDVLLVSGRIEHAEEEARLAMRLAGSAEDSAAVSWVANNRGLVCLHQRRYAEGKGLFHQAIAGFRATDNRAGEASALSNLSRAQLGMGNVAEAVDIARQGLAVYAELGRTMRLANGHFALGVALTRAGRHEEALGEFAEALDLFGDHRQRLWEGATNFRLAEVHLAAGRPSSAAQHAEQALALGCIGGDRMRGNVLALLGRALSALGQADRARACWREALSLYEQHDAQEVGEVRALLARSVAR</sequence>
<feature type="chain" id="PRO_0000110004" description="Regulatory protein AfsR">
    <location>
        <begin position="1"/>
        <end position="993"/>
    </location>
</feature>
<feature type="domain" description="NB-ARC">
    <location>
        <begin position="280"/>
        <end position="579"/>
    </location>
</feature>
<feature type="repeat" description="TPR 1">
    <location>
        <begin position="823"/>
        <end position="856"/>
    </location>
</feature>
<feature type="repeat" description="TPR 2">
    <location>
        <begin position="863"/>
        <end position="896"/>
    </location>
</feature>
<feature type="repeat" description="TPR 3">
    <location>
        <begin position="942"/>
        <end position="975"/>
    </location>
</feature>
<feature type="DNA-binding region" description="OmpR/PhoB-type" evidence="2">
    <location>
        <begin position="17"/>
        <end position="113"/>
    </location>
</feature>
<feature type="DNA-binding region" description="H-T-H motif" evidence="1">
    <location>
        <begin position="796"/>
        <end position="811"/>
    </location>
</feature>
<feature type="DNA-binding region" description="H-T-H motif" evidence="1">
    <location>
        <begin position="974"/>
        <end position="988"/>
    </location>
</feature>
<feature type="region of interest" description="Disordered" evidence="3">
    <location>
        <begin position="1"/>
        <end position="21"/>
    </location>
</feature>
<feature type="binding site" evidence="1">
    <location>
        <begin position="330"/>
        <end position="337"/>
    </location>
    <ligand>
        <name>ATP</name>
        <dbReference type="ChEBI" id="CHEBI:30616"/>
    </ligand>
</feature>
<feature type="sequence conflict" description="In Ref. 1; BAA14186." evidence="4" ref="1">
    <original>Q</original>
    <variation>R</variation>
    <location>
        <position position="256"/>
    </location>
</feature>
<feature type="sequence conflict" description="In Ref. 1; BAA14186." evidence="4" ref="1">
    <original>A</original>
    <variation>P</variation>
    <location>
        <position position="318"/>
    </location>
</feature>
<feature type="sequence conflict" description="In Ref. 3." evidence="4" ref="3">
    <original>DVLLVSGRIEHAEEEA</original>
    <variation>MCSWCPVASSMPRKRH</variation>
    <location>
        <begin position="751"/>
        <end position="766"/>
    </location>
</feature>
<feature type="strand" evidence="5">
    <location>
        <begin position="25"/>
        <end position="28"/>
    </location>
</feature>
<feature type="strand" evidence="5">
    <location>
        <begin position="30"/>
        <end position="32"/>
    </location>
</feature>
<feature type="strand" evidence="5">
    <location>
        <begin position="34"/>
        <end position="37"/>
    </location>
</feature>
<feature type="strand" evidence="5">
    <location>
        <begin position="40"/>
        <end position="42"/>
    </location>
</feature>
<feature type="helix" evidence="5">
    <location>
        <begin position="47"/>
        <end position="57"/>
    </location>
</feature>
<feature type="turn" evidence="5">
    <location>
        <begin position="58"/>
        <end position="60"/>
    </location>
</feature>
<feature type="helix" evidence="5">
    <location>
        <begin position="66"/>
        <end position="74"/>
    </location>
</feature>
<feature type="helix" evidence="5">
    <location>
        <begin position="83"/>
        <end position="96"/>
    </location>
</feature>
<feature type="turn" evidence="5">
    <location>
        <begin position="99"/>
        <end position="101"/>
    </location>
</feature>
<feature type="strand" evidence="5">
    <location>
        <begin position="102"/>
        <end position="105"/>
    </location>
</feature>
<feature type="strand" evidence="5">
    <location>
        <begin position="108"/>
        <end position="111"/>
    </location>
</feature>
<feature type="helix" evidence="5">
    <location>
        <begin position="120"/>
        <end position="137"/>
    </location>
</feature>
<feature type="helix" evidence="5">
    <location>
        <begin position="140"/>
        <end position="151"/>
    </location>
</feature>
<feature type="strand" evidence="5">
    <location>
        <begin position="156"/>
        <end position="159"/>
    </location>
</feature>
<feature type="helix" evidence="5">
    <location>
        <begin position="165"/>
        <end position="192"/>
    </location>
</feature>
<feature type="helix" evidence="5">
    <location>
        <begin position="196"/>
        <end position="208"/>
    </location>
</feature>
<feature type="helix" evidence="5">
    <location>
        <begin position="213"/>
        <end position="224"/>
    </location>
</feature>
<feature type="turn" evidence="5">
    <location>
        <begin position="225"/>
        <end position="227"/>
    </location>
</feature>
<feature type="helix" evidence="5">
    <location>
        <begin position="230"/>
        <end position="246"/>
    </location>
</feature>
<feature type="helix" evidence="5">
    <location>
        <begin position="253"/>
        <end position="263"/>
    </location>
</feature>
<feature type="turn" evidence="5">
    <location>
        <begin position="267"/>
        <end position="269"/>
    </location>
</feature>
<protein>
    <recommendedName>
        <fullName>Regulatory protein AfsR</fullName>
    </recommendedName>
</protein>
<reference key="1">
    <citation type="journal article" date="1990" name="Gene">
        <title>Primary structure of AfsR, a global regulatory protein for secondary metabolite formation in Streptomyces coelicolor A3(2).</title>
        <authorList>
            <person name="Horinouchi S."/>
            <person name="Kito M."/>
            <person name="Nishiyama M."/>
            <person name="Furuya K."/>
            <person name="Hong S.-K."/>
            <person name="Miyake K."/>
            <person name="Beppu T."/>
        </authorList>
    </citation>
    <scope>NUCLEOTIDE SEQUENCE [GENOMIC DNA]</scope>
    <source>
        <strain>A3(2) / NRRL B-16638</strain>
    </source>
</reference>
<reference key="2">
    <citation type="journal article" date="2002" name="Nature">
        <title>Complete genome sequence of the model actinomycete Streptomyces coelicolor A3(2).</title>
        <authorList>
            <person name="Bentley S.D."/>
            <person name="Chater K.F."/>
            <person name="Cerdeno-Tarraga A.-M."/>
            <person name="Challis G.L."/>
            <person name="Thomson N.R."/>
            <person name="James K.D."/>
            <person name="Harris D.E."/>
            <person name="Quail M.A."/>
            <person name="Kieser H."/>
            <person name="Harper D."/>
            <person name="Bateman A."/>
            <person name="Brown S."/>
            <person name="Chandra G."/>
            <person name="Chen C.W."/>
            <person name="Collins M."/>
            <person name="Cronin A."/>
            <person name="Fraser A."/>
            <person name="Goble A."/>
            <person name="Hidalgo J."/>
            <person name="Hornsby T."/>
            <person name="Howarth S."/>
            <person name="Huang C.-H."/>
            <person name="Kieser T."/>
            <person name="Larke L."/>
            <person name="Murphy L.D."/>
            <person name="Oliver K."/>
            <person name="O'Neil S."/>
            <person name="Rabbinowitsch E."/>
            <person name="Rajandream M.A."/>
            <person name="Rutherford K.M."/>
            <person name="Rutter S."/>
            <person name="Seeger K."/>
            <person name="Saunders D."/>
            <person name="Sharp S."/>
            <person name="Squares R."/>
            <person name="Squares S."/>
            <person name="Taylor K."/>
            <person name="Warren T."/>
            <person name="Wietzorrek A."/>
            <person name="Woodward J.R."/>
            <person name="Barrell B.G."/>
            <person name="Parkhill J."/>
            <person name="Hopwood D.A."/>
        </authorList>
    </citation>
    <scope>NUCLEOTIDE SEQUENCE [LARGE SCALE GENOMIC DNA]</scope>
    <source>
        <strain>ATCC BAA-471 / A3(2) / M145</strain>
    </source>
</reference>
<reference key="3">
    <citation type="journal article" date="1986" name="J. Bacteriol.">
        <title>Nucleotide sequence of afsB, a pleiotropic gene involved in secondary metabolism in Streptomyces coelicolor A3(2) and 'Streptomyces lividans'.</title>
        <authorList>
            <person name="Horinouchi S."/>
            <person name="Suzuki H."/>
            <person name="Beppu T."/>
        </authorList>
    </citation>
    <scope>NUCLEOTIDE SEQUENCE [GENOMIC DNA] OF 751-993</scope>
    <source>
        <strain>A3(2) / NRRL B-16638</strain>
    </source>
</reference>
<proteinExistence type="evidence at protein level"/>
<keyword id="KW-0002">3D-structure</keyword>
<keyword id="KW-0010">Activator</keyword>
<keyword id="KW-0045">Antibiotic biosynthesis</keyword>
<keyword id="KW-0067">ATP-binding</keyword>
<keyword id="KW-0238">DNA-binding</keyword>
<keyword id="KW-0547">Nucleotide-binding</keyword>
<keyword id="KW-0597">Phosphoprotein</keyword>
<keyword id="KW-0608">Pigment</keyword>
<keyword id="KW-1185">Reference proteome</keyword>
<keyword id="KW-0677">Repeat</keyword>
<keyword id="KW-0802">TPR repeat</keyword>
<keyword id="KW-0804">Transcription</keyword>
<keyword id="KW-0805">Transcription regulation</keyword>
<keyword id="KW-0902">Two-component regulatory system</keyword>
<comment type="function">
    <text>Global regulatory protein for secondary metabolite formation.</text>
</comment>
<comment type="domain">
    <text>The N-terminal and the C-terminal regions are independently capable of directing actinorhodin production.</text>
</comment>
<comment type="PTM">
    <text>Phosphorylated by AfsK.</text>
</comment>
<comment type="similarity">
    <text evidence="4">Belongs to the AfsR/DnrI/RedD regulatory family.</text>
</comment>
<name>AFSR_STRCO</name>
<dbReference type="EMBL" id="D90155">
    <property type="protein sequence ID" value="BAA14186.1"/>
    <property type="molecule type" value="Genomic_DNA"/>
</dbReference>
<dbReference type="EMBL" id="AL939120">
    <property type="protein sequence ID" value="CAB88433.1"/>
    <property type="molecule type" value="Genomic_DNA"/>
</dbReference>
<dbReference type="EMBL" id="M16011">
    <property type="protein sequence ID" value="AAA26694.1"/>
    <property type="molecule type" value="Genomic_DNA"/>
</dbReference>
<dbReference type="PIR" id="A25037">
    <property type="entry name" value="A25037"/>
</dbReference>
<dbReference type="PIR" id="JQ0488">
    <property type="entry name" value="JQ0488"/>
</dbReference>
<dbReference type="RefSeq" id="NP_628593.1">
    <property type="nucleotide sequence ID" value="NC_003888.3"/>
</dbReference>
<dbReference type="RefSeq" id="WP_011029645.1">
    <property type="nucleotide sequence ID" value="NZ_VNID01000017.1"/>
</dbReference>
<dbReference type="PDB" id="8HVR">
    <property type="method" value="EM"/>
    <property type="resolution" value="3.35 A"/>
    <property type="chains" value="I/J=1-270"/>
</dbReference>
<dbReference type="PDB" id="8JKE">
    <property type="method" value="EM"/>
    <property type="resolution" value="3.67 A"/>
    <property type="chains" value="I/J=1-993"/>
</dbReference>
<dbReference type="PDB" id="8K60">
    <property type="method" value="EM"/>
    <property type="resolution" value="3.40 A"/>
    <property type="chains" value="I/J=1-993"/>
</dbReference>
<dbReference type="PDBsum" id="8HVR"/>
<dbReference type="PDBsum" id="8JKE"/>
<dbReference type="PDBsum" id="8K60"/>
<dbReference type="EMDB" id="EMD-35047"/>
<dbReference type="EMDB" id="EMD-36370"/>
<dbReference type="EMDB" id="EMD-36914"/>
<dbReference type="SMR" id="P25941"/>
<dbReference type="STRING" id="100226.gene:17762071"/>
<dbReference type="PaxDb" id="100226-SCO4426"/>
<dbReference type="KEGG" id="sco:SCO4426"/>
<dbReference type="PATRIC" id="fig|100226.15.peg.4495"/>
<dbReference type="eggNOG" id="COG3629">
    <property type="taxonomic scope" value="Bacteria"/>
</dbReference>
<dbReference type="eggNOG" id="COG3903">
    <property type="taxonomic scope" value="Bacteria"/>
</dbReference>
<dbReference type="HOGENOM" id="CLU_004665_2_0_11"/>
<dbReference type="InParanoid" id="P25941"/>
<dbReference type="OrthoDB" id="3845029at2"/>
<dbReference type="PhylomeDB" id="P25941"/>
<dbReference type="Proteomes" id="UP000001973">
    <property type="component" value="Chromosome"/>
</dbReference>
<dbReference type="GO" id="GO:0043531">
    <property type="term" value="F:ADP binding"/>
    <property type="evidence" value="ECO:0007669"/>
    <property type="project" value="InterPro"/>
</dbReference>
<dbReference type="GO" id="GO:0005524">
    <property type="term" value="F:ATP binding"/>
    <property type="evidence" value="ECO:0007669"/>
    <property type="project" value="UniProtKB-KW"/>
</dbReference>
<dbReference type="GO" id="GO:0003677">
    <property type="term" value="F:DNA binding"/>
    <property type="evidence" value="ECO:0007669"/>
    <property type="project" value="UniProtKB-KW"/>
</dbReference>
<dbReference type="GO" id="GO:0031409">
    <property type="term" value="F:pigment binding"/>
    <property type="evidence" value="ECO:0007669"/>
    <property type="project" value="UniProtKB-KW"/>
</dbReference>
<dbReference type="GO" id="GO:0017000">
    <property type="term" value="P:antibiotic biosynthetic process"/>
    <property type="evidence" value="ECO:0007669"/>
    <property type="project" value="UniProtKB-KW"/>
</dbReference>
<dbReference type="GO" id="GO:0000160">
    <property type="term" value="P:phosphorelay signal transduction system"/>
    <property type="evidence" value="ECO:0007669"/>
    <property type="project" value="UniProtKB-KW"/>
</dbReference>
<dbReference type="GO" id="GO:0006355">
    <property type="term" value="P:regulation of DNA-templated transcription"/>
    <property type="evidence" value="ECO:0007669"/>
    <property type="project" value="InterPro"/>
</dbReference>
<dbReference type="CDD" id="cd15831">
    <property type="entry name" value="BTAD"/>
    <property type="match status" value="1"/>
</dbReference>
<dbReference type="Gene3D" id="1.25.40.10">
    <property type="entry name" value="Tetratricopeptide repeat domain"/>
    <property type="match status" value="2"/>
</dbReference>
<dbReference type="Gene3D" id="1.10.10.10">
    <property type="entry name" value="Winged helix-like DNA-binding domain superfamily/Winged helix DNA-binding domain"/>
    <property type="match status" value="1"/>
</dbReference>
<dbReference type="InterPro" id="IPR051677">
    <property type="entry name" value="AfsR-DnrI-RedD_regulator"/>
</dbReference>
<dbReference type="InterPro" id="IPR005158">
    <property type="entry name" value="BTAD"/>
</dbReference>
<dbReference type="InterPro" id="IPR002182">
    <property type="entry name" value="NB-ARC"/>
</dbReference>
<dbReference type="InterPro" id="IPR001867">
    <property type="entry name" value="OmpR/PhoB-type_DNA-bd"/>
</dbReference>
<dbReference type="InterPro" id="IPR027417">
    <property type="entry name" value="P-loop_NTPase"/>
</dbReference>
<dbReference type="InterPro" id="IPR016032">
    <property type="entry name" value="Sig_transdc_resp-reg_C-effctor"/>
</dbReference>
<dbReference type="InterPro" id="IPR011990">
    <property type="entry name" value="TPR-like_helical_dom_sf"/>
</dbReference>
<dbReference type="InterPro" id="IPR019734">
    <property type="entry name" value="TPR_rpt"/>
</dbReference>
<dbReference type="InterPro" id="IPR036388">
    <property type="entry name" value="WH-like_DNA-bd_sf"/>
</dbReference>
<dbReference type="PANTHER" id="PTHR35807:SF1">
    <property type="entry name" value="TRANSCRIPTIONAL REGULATOR REDD"/>
    <property type="match status" value="1"/>
</dbReference>
<dbReference type="PANTHER" id="PTHR35807">
    <property type="entry name" value="TRANSCRIPTIONAL REGULATOR REDD-RELATED"/>
    <property type="match status" value="1"/>
</dbReference>
<dbReference type="Pfam" id="PF03704">
    <property type="entry name" value="BTAD"/>
    <property type="match status" value="1"/>
</dbReference>
<dbReference type="Pfam" id="PF00931">
    <property type="entry name" value="NB-ARC"/>
    <property type="match status" value="1"/>
</dbReference>
<dbReference type="Pfam" id="PF13374">
    <property type="entry name" value="TPR_10"/>
    <property type="match status" value="1"/>
</dbReference>
<dbReference type="Pfam" id="PF13424">
    <property type="entry name" value="TPR_12"/>
    <property type="match status" value="2"/>
</dbReference>
<dbReference type="Pfam" id="PF00486">
    <property type="entry name" value="Trans_reg_C"/>
    <property type="match status" value="1"/>
</dbReference>
<dbReference type="PRINTS" id="PR00364">
    <property type="entry name" value="DISEASERSIST"/>
</dbReference>
<dbReference type="SMART" id="SM01043">
    <property type="entry name" value="BTAD"/>
    <property type="match status" value="1"/>
</dbReference>
<dbReference type="SMART" id="SM00028">
    <property type="entry name" value="TPR"/>
    <property type="match status" value="4"/>
</dbReference>
<dbReference type="SMART" id="SM00862">
    <property type="entry name" value="Trans_reg_C"/>
    <property type="match status" value="1"/>
</dbReference>
<dbReference type="SUPFAM" id="SSF46894">
    <property type="entry name" value="C-terminal effector domain of the bipartite response regulators"/>
    <property type="match status" value="1"/>
</dbReference>
<dbReference type="SUPFAM" id="SSF52540">
    <property type="entry name" value="P-loop containing nucleoside triphosphate hydrolases"/>
    <property type="match status" value="1"/>
</dbReference>
<dbReference type="SUPFAM" id="SSF48452">
    <property type="entry name" value="TPR-like"/>
    <property type="match status" value="2"/>
</dbReference>
<dbReference type="PROSITE" id="PS51755">
    <property type="entry name" value="OMPR_PHOB"/>
    <property type="match status" value="1"/>
</dbReference>
<dbReference type="PROSITE" id="PS50005">
    <property type="entry name" value="TPR"/>
    <property type="match status" value="3"/>
</dbReference>
<dbReference type="PROSITE" id="PS50293">
    <property type="entry name" value="TPR_REGION"/>
    <property type="match status" value="1"/>
</dbReference>